<proteinExistence type="inferred from homology"/>
<feature type="chain" id="PRO_0000188004" description="ATP-dependent dethiobiotin synthetase BioD">
    <location>
        <begin position="1"/>
        <end position="222"/>
    </location>
</feature>
<feature type="active site" evidence="1">
    <location>
        <position position="38"/>
    </location>
</feature>
<feature type="binding site" evidence="1">
    <location>
        <position position="17"/>
    </location>
    <ligand>
        <name>Mg(2+)</name>
        <dbReference type="ChEBI" id="CHEBI:18420"/>
    </ligand>
</feature>
<feature type="binding site" evidence="1">
    <location>
        <position position="42"/>
    </location>
    <ligand>
        <name>substrate</name>
    </ligand>
</feature>
<feature type="binding site" evidence="1">
    <location>
        <position position="55"/>
    </location>
    <ligand>
        <name>ATP</name>
        <dbReference type="ChEBI" id="CHEBI:30616"/>
    </ligand>
</feature>
<feature type="binding site" evidence="1">
    <location>
        <position position="55"/>
    </location>
    <ligand>
        <name>Mg(2+)</name>
        <dbReference type="ChEBI" id="CHEBI:18420"/>
    </ligand>
</feature>
<feature type="binding site" evidence="1">
    <location>
        <begin position="112"/>
        <end position="115"/>
    </location>
    <ligand>
        <name>ATP</name>
        <dbReference type="ChEBI" id="CHEBI:30616"/>
    </ligand>
</feature>
<feature type="binding site" evidence="1">
    <location>
        <position position="112"/>
    </location>
    <ligand>
        <name>Mg(2+)</name>
        <dbReference type="ChEBI" id="CHEBI:18420"/>
    </ligand>
</feature>
<feature type="binding site" evidence="1">
    <location>
        <begin position="172"/>
        <end position="173"/>
    </location>
    <ligand>
        <name>ATP</name>
        <dbReference type="ChEBI" id="CHEBI:30616"/>
    </ligand>
</feature>
<feature type="binding site" evidence="1">
    <location>
        <begin position="201"/>
        <end position="203"/>
    </location>
    <ligand>
        <name>ATP</name>
        <dbReference type="ChEBI" id="CHEBI:30616"/>
    </ligand>
</feature>
<feature type="binding site" evidence="1">
    <location>
        <position position="208"/>
    </location>
    <ligand>
        <name>ATP</name>
        <dbReference type="ChEBI" id="CHEBI:30616"/>
    </ligand>
</feature>
<keyword id="KW-0067">ATP-binding</keyword>
<keyword id="KW-0093">Biotin biosynthesis</keyword>
<keyword id="KW-0963">Cytoplasm</keyword>
<keyword id="KW-0436">Ligase</keyword>
<keyword id="KW-0460">Magnesium</keyword>
<keyword id="KW-0479">Metal-binding</keyword>
<keyword id="KW-0547">Nucleotide-binding</keyword>
<gene>
    <name evidence="1" type="primary">bioD</name>
    <name type="synonym">bioD2</name>
    <name type="ordered locus">YPTB2191</name>
</gene>
<protein>
    <recommendedName>
        <fullName evidence="1">ATP-dependent dethiobiotin synthetase BioD</fullName>
        <ecNumber evidence="1">6.3.3.3</ecNumber>
    </recommendedName>
    <alternativeName>
        <fullName evidence="1">DTB synthetase</fullName>
        <shortName evidence="1">DTBS</shortName>
    </alternativeName>
    <alternativeName>
        <fullName evidence="1">Dethiobiotin synthase</fullName>
    </alternativeName>
</protein>
<evidence type="ECO:0000255" key="1">
    <source>
        <dbReference type="HAMAP-Rule" id="MF_00336"/>
    </source>
</evidence>
<comment type="function">
    <text evidence="1">Catalyzes a mechanistically unusual reaction, the ATP-dependent insertion of CO2 between the N7 and N8 nitrogen atoms of 7,8-diaminopelargonic acid (DAPA, also called 7,8-diammoniononanoate) to form a ureido ring.</text>
</comment>
<comment type="catalytic activity">
    <reaction evidence="1">
        <text>(7R,8S)-7,8-diammoniononanoate + CO2 + ATP = (4R,5S)-dethiobiotin + ADP + phosphate + 3 H(+)</text>
        <dbReference type="Rhea" id="RHEA:15805"/>
        <dbReference type="ChEBI" id="CHEBI:15378"/>
        <dbReference type="ChEBI" id="CHEBI:16526"/>
        <dbReference type="ChEBI" id="CHEBI:30616"/>
        <dbReference type="ChEBI" id="CHEBI:43474"/>
        <dbReference type="ChEBI" id="CHEBI:149469"/>
        <dbReference type="ChEBI" id="CHEBI:149473"/>
        <dbReference type="ChEBI" id="CHEBI:456216"/>
        <dbReference type="EC" id="6.3.3.3"/>
    </reaction>
</comment>
<comment type="cofactor">
    <cofactor evidence="1">
        <name>Mg(2+)</name>
        <dbReference type="ChEBI" id="CHEBI:18420"/>
    </cofactor>
</comment>
<comment type="pathway">
    <text evidence="1">Cofactor biosynthesis; biotin biosynthesis; biotin from 7,8-diaminononanoate: step 1/2.</text>
</comment>
<comment type="subunit">
    <text evidence="1">Homodimer.</text>
</comment>
<comment type="subcellular location">
    <subcellularLocation>
        <location evidence="1">Cytoplasm</location>
    </subcellularLocation>
</comment>
<comment type="similarity">
    <text evidence="1">Belongs to the dethiobiotin synthetase family.</text>
</comment>
<organism>
    <name type="scientific">Yersinia pseudotuberculosis serotype I (strain IP32953)</name>
    <dbReference type="NCBI Taxonomy" id="273123"/>
    <lineage>
        <taxon>Bacteria</taxon>
        <taxon>Pseudomonadati</taxon>
        <taxon>Pseudomonadota</taxon>
        <taxon>Gammaproteobacteria</taxon>
        <taxon>Enterobacterales</taxon>
        <taxon>Yersiniaceae</taxon>
        <taxon>Yersinia</taxon>
    </lineage>
</organism>
<name>BIOD_YERPS</name>
<accession>P69954</accession>
<accession>Q66AD9</accession>
<accession>Q9AGD4</accession>
<dbReference type="EC" id="6.3.3.3" evidence="1"/>
<dbReference type="EMBL" id="AF335466">
    <property type="protein sequence ID" value="AAK28549.1"/>
    <property type="molecule type" value="Genomic_DNA"/>
</dbReference>
<dbReference type="EMBL" id="AF414083">
    <property type="protein sequence ID" value="AAL02239.1"/>
    <property type="molecule type" value="Genomic_DNA"/>
</dbReference>
<dbReference type="EMBL" id="BX936398">
    <property type="protein sequence ID" value="CAH21429.1"/>
    <property type="molecule type" value="Genomic_DNA"/>
</dbReference>
<dbReference type="RefSeq" id="WP_002210575.1">
    <property type="nucleotide sequence ID" value="NZ_CP009712.1"/>
</dbReference>
<dbReference type="SMR" id="P69954"/>
<dbReference type="GeneID" id="57976401"/>
<dbReference type="KEGG" id="ypo:BZ17_269"/>
<dbReference type="KEGG" id="yps:YPTB2191"/>
<dbReference type="PATRIC" id="fig|273123.14.peg.285"/>
<dbReference type="UniPathway" id="UPA00078">
    <property type="reaction ID" value="UER00161"/>
</dbReference>
<dbReference type="Proteomes" id="UP000001011">
    <property type="component" value="Chromosome"/>
</dbReference>
<dbReference type="GO" id="GO:0005829">
    <property type="term" value="C:cytosol"/>
    <property type="evidence" value="ECO:0007669"/>
    <property type="project" value="TreeGrafter"/>
</dbReference>
<dbReference type="GO" id="GO:0005524">
    <property type="term" value="F:ATP binding"/>
    <property type="evidence" value="ECO:0007669"/>
    <property type="project" value="UniProtKB-UniRule"/>
</dbReference>
<dbReference type="GO" id="GO:0004141">
    <property type="term" value="F:dethiobiotin synthase activity"/>
    <property type="evidence" value="ECO:0000250"/>
    <property type="project" value="UniProtKB"/>
</dbReference>
<dbReference type="GO" id="GO:0000287">
    <property type="term" value="F:magnesium ion binding"/>
    <property type="evidence" value="ECO:0007669"/>
    <property type="project" value="UniProtKB-UniRule"/>
</dbReference>
<dbReference type="GO" id="GO:0009102">
    <property type="term" value="P:biotin biosynthetic process"/>
    <property type="evidence" value="ECO:0007669"/>
    <property type="project" value="UniProtKB-UniRule"/>
</dbReference>
<dbReference type="CDD" id="cd03109">
    <property type="entry name" value="DTBS"/>
    <property type="match status" value="1"/>
</dbReference>
<dbReference type="FunFam" id="3.40.50.300:FF:000292">
    <property type="entry name" value="ATP-dependent dethiobiotin synthetase BioD"/>
    <property type="match status" value="1"/>
</dbReference>
<dbReference type="Gene3D" id="3.40.50.300">
    <property type="entry name" value="P-loop containing nucleotide triphosphate hydrolases"/>
    <property type="match status" value="1"/>
</dbReference>
<dbReference type="HAMAP" id="MF_00336">
    <property type="entry name" value="BioD"/>
    <property type="match status" value="1"/>
</dbReference>
<dbReference type="InterPro" id="IPR004472">
    <property type="entry name" value="DTB_synth_BioD"/>
</dbReference>
<dbReference type="InterPro" id="IPR027417">
    <property type="entry name" value="P-loop_NTPase"/>
</dbReference>
<dbReference type="NCBIfam" id="TIGR00347">
    <property type="entry name" value="bioD"/>
    <property type="match status" value="1"/>
</dbReference>
<dbReference type="PANTHER" id="PTHR43210:SF4">
    <property type="entry name" value="ATP-DEPENDENT DETHIOBIOTIN SYNTHETASE BIOD 2"/>
    <property type="match status" value="1"/>
</dbReference>
<dbReference type="PANTHER" id="PTHR43210">
    <property type="entry name" value="DETHIOBIOTIN SYNTHETASE"/>
    <property type="match status" value="1"/>
</dbReference>
<dbReference type="Pfam" id="PF13500">
    <property type="entry name" value="AAA_26"/>
    <property type="match status" value="1"/>
</dbReference>
<dbReference type="PIRSF" id="PIRSF006755">
    <property type="entry name" value="DTB_synth"/>
    <property type="match status" value="1"/>
</dbReference>
<dbReference type="SUPFAM" id="SSF52540">
    <property type="entry name" value="P-loop containing nucleoside triphosphate hydrolases"/>
    <property type="match status" value="1"/>
</dbReference>
<reference key="1">
    <citation type="submission" date="2001-08" db="EMBL/GenBank/DDBJ databases">
        <title>Genetic environment of the ypmA superantigen gene of Yersinia pseudotuberculosis.</title>
        <authorList>
            <person name="Carnoy C.A."/>
            <person name="Floquet S."/>
            <person name="Herwegh S."/>
            <person name="Devalckenaere A."/>
            <person name="Simonet M."/>
        </authorList>
    </citation>
    <scope>NUCLEOTIDE SEQUENCE [GENOMIC DNA]</scope>
    <source>
        <strain>AH</strain>
    </source>
</reference>
<reference key="2">
    <citation type="submission" date="2001-08" db="EMBL/GenBank/DDBJ databases">
        <title>Genetic environment of the superantigen genes of Yersinia pseudotuberculosis.</title>
        <authorList>
            <person name="Carnoy C."/>
            <person name="Floquet S."/>
            <person name="Simonet M."/>
        </authorList>
    </citation>
    <scope>NUCLEOTIDE SEQUENCE [GENOMIC DNA]</scope>
    <source>
        <strain>YPT1 / Serotype 3</strain>
    </source>
</reference>
<reference key="3">
    <citation type="journal article" date="2004" name="Proc. Natl. Acad. Sci. U.S.A.">
        <title>Insights into the evolution of Yersinia pestis through whole-genome comparison with Yersinia pseudotuberculosis.</title>
        <authorList>
            <person name="Chain P.S.G."/>
            <person name="Carniel E."/>
            <person name="Larimer F.W."/>
            <person name="Lamerdin J."/>
            <person name="Stoutland P.O."/>
            <person name="Regala W.M."/>
            <person name="Georgescu A.M."/>
            <person name="Vergez L.M."/>
            <person name="Land M.L."/>
            <person name="Motin V.L."/>
            <person name="Brubaker R.R."/>
            <person name="Fowler J."/>
            <person name="Hinnebusch J."/>
            <person name="Marceau M."/>
            <person name="Medigue C."/>
            <person name="Simonet M."/>
            <person name="Chenal-Francisque V."/>
            <person name="Souza B."/>
            <person name="Dacheux D."/>
            <person name="Elliott J.M."/>
            <person name="Derbise A."/>
            <person name="Hauser L.J."/>
            <person name="Garcia E."/>
        </authorList>
    </citation>
    <scope>NUCLEOTIDE SEQUENCE [LARGE SCALE GENOMIC DNA]</scope>
    <source>
        <strain>IP32953</strain>
    </source>
</reference>
<sequence>MLTRLFVTGTDTAVGKTVVSRALLQALSQNGRTAVGYKPVATESKETSEGLRNQDALILQASSSIELNYQEVNPYPLQGDVIHACTDTLINYEKMTEGLQCLSAKADTVIVEGCGGWKVMMNDQRFYSDWVVQEQLPVILVVGIKLGCINHALLTAQAIINDGLPLLGWVANRINPGLAHYAETIAMLRDRLAAPQLGQLPYLPRPEEKPLAKYLDLTAISG</sequence>